<accession>Q4P9Z3</accession>
<accession>A0A0D1C646</accession>
<sequence length="629" mass="67344">MDGQAEGSSQYRRVHLPPRSEYRFELEPHERLSIRLVQGRTQSGEDPDAEIFGAELVGGSQERWYPFGDEAKAAVSSWRGAEIEVAGSASTEYLAEEPSPVYTAYSNLHLYLERKRIQARQALRADAKLLTTLASSVLDPSYIAPRTTDPNTETESDPSGTAAATVYRPEGQGPRVMILGPESAGKTSLVKLLANYALRSPAVASLGKGEAAKVAESLRTGGDGIIYPNMEDNLSEEAKKQKREEEKRSDITGWWPVVVNLDPSDGAPPLPCCLSALPLSPLPLASLPSASPAYAFGTNTSTTGAIPPGTSTAHGVAPLSLWLGKENLRENERHFRRVVDWLAEGVERRFARDFRSRMSGLIIDTPGVITADARNKYAFIQHCVKAFKVDTIVVLGHEKLNLEMTKLFASPAVTTVETAEIPGSAGQRLPRVNVIKLPKSGGVVELDETYRSRLKALQVKTYFYGGSTSGSANTDGGVPKPVLPGHSDPLGGVPSLSPYSTTIPFDLLEIYKVGQESLAPSSALPIGASRTVTETQLVKLDPTNSAADQTSLLHSVLALIQPPRGGGGAGQPDSSTNPTDDEIIGAPILGFVHVADIDTVRKKITVLSPSAGRLPSKTAIIGSLDWQDV</sequence>
<comment type="function">
    <text evidence="1">Required for endonucleolytic cleavage during polyadenylation-dependent pre-mRNA 3'-end formation.</text>
</comment>
<comment type="subunit">
    <text evidence="1">Component of a pre-mRNA cleavage factor complex. Interacts directly with PCF11.</text>
</comment>
<comment type="subcellular location">
    <subcellularLocation>
        <location evidence="1">Nucleus</location>
    </subcellularLocation>
</comment>
<comment type="similarity">
    <text evidence="1">Belongs to the Clp1 family. Clp1 subfamily.</text>
</comment>
<comment type="caution">
    <text evidence="3">May lack the polyribonucleotide 5'-hydroxyl-kinase and polynucleotide 5'-hydroxyl-kinase activities that are characteristic of the human ortholog.</text>
</comment>
<proteinExistence type="inferred from homology"/>
<dbReference type="EMBL" id="CM003146">
    <property type="protein sequence ID" value="KIS69092.1"/>
    <property type="molecule type" value="Genomic_DNA"/>
</dbReference>
<dbReference type="RefSeq" id="XP_011389435.1">
    <property type="nucleotide sequence ID" value="XM_011391133.1"/>
</dbReference>
<dbReference type="SMR" id="Q4P9Z3"/>
<dbReference type="FunCoup" id="Q4P9Z3">
    <property type="interactions" value="527"/>
</dbReference>
<dbReference type="STRING" id="237631.Q4P9Z3"/>
<dbReference type="EnsemblFungi" id="KIS69092">
    <property type="protein sequence ID" value="KIS69092"/>
    <property type="gene ID" value="UMAG_03070"/>
</dbReference>
<dbReference type="GeneID" id="23563645"/>
<dbReference type="KEGG" id="uma:UMAG_03070"/>
<dbReference type="VEuPathDB" id="FungiDB:UMAG_03070"/>
<dbReference type="eggNOG" id="KOG2749">
    <property type="taxonomic scope" value="Eukaryota"/>
</dbReference>
<dbReference type="HOGENOM" id="CLU_018195_3_1_1"/>
<dbReference type="InParanoid" id="Q4P9Z3"/>
<dbReference type="OMA" id="DITGWWP"/>
<dbReference type="OrthoDB" id="258143at2759"/>
<dbReference type="Proteomes" id="UP000000561">
    <property type="component" value="Chromosome 7"/>
</dbReference>
<dbReference type="GO" id="GO:0005849">
    <property type="term" value="C:mRNA cleavage factor complex"/>
    <property type="evidence" value="ECO:0007669"/>
    <property type="project" value="UniProtKB-UniRule"/>
</dbReference>
<dbReference type="GO" id="GO:0005634">
    <property type="term" value="C:nucleus"/>
    <property type="evidence" value="ECO:0000318"/>
    <property type="project" value="GO_Central"/>
</dbReference>
<dbReference type="GO" id="GO:0005524">
    <property type="term" value="F:ATP binding"/>
    <property type="evidence" value="ECO:0007669"/>
    <property type="project" value="UniProtKB-UniRule"/>
</dbReference>
<dbReference type="GO" id="GO:0051731">
    <property type="term" value="F:polynucleotide 5'-hydroxyl-kinase activity"/>
    <property type="evidence" value="ECO:0000318"/>
    <property type="project" value="GO_Central"/>
</dbReference>
<dbReference type="GO" id="GO:0031124">
    <property type="term" value="P:mRNA 3'-end processing"/>
    <property type="evidence" value="ECO:0007669"/>
    <property type="project" value="UniProtKB-UniRule"/>
</dbReference>
<dbReference type="GO" id="GO:0006388">
    <property type="term" value="P:tRNA splicing, via endonucleolytic cleavage and ligation"/>
    <property type="evidence" value="ECO:0000318"/>
    <property type="project" value="GO_Central"/>
</dbReference>
<dbReference type="FunFam" id="2.40.30.330:FF:000004">
    <property type="entry name" value="mRNA cleavage and polyadenylation factor CLP1"/>
    <property type="match status" value="1"/>
</dbReference>
<dbReference type="FunFam" id="2.60.120.1030:FF:000001">
    <property type="entry name" value="Protein CLP1 homolog 5"/>
    <property type="match status" value="1"/>
</dbReference>
<dbReference type="Gene3D" id="2.60.120.1030">
    <property type="entry name" value="Clp1, DNA binding domain"/>
    <property type="match status" value="1"/>
</dbReference>
<dbReference type="Gene3D" id="3.40.50.300">
    <property type="entry name" value="P-loop containing nucleotide triphosphate hydrolases"/>
    <property type="match status" value="1"/>
</dbReference>
<dbReference type="Gene3D" id="2.40.30.330">
    <property type="entry name" value="Pre-mRNA cleavage complex subunit Clp1, C-terminal domain"/>
    <property type="match status" value="1"/>
</dbReference>
<dbReference type="HAMAP" id="MF_03035">
    <property type="entry name" value="Clp1"/>
    <property type="match status" value="1"/>
</dbReference>
<dbReference type="InterPro" id="IPR028606">
    <property type="entry name" value="Clp1"/>
</dbReference>
<dbReference type="InterPro" id="IPR045116">
    <property type="entry name" value="Clp1/Grc3"/>
</dbReference>
<dbReference type="InterPro" id="IPR010655">
    <property type="entry name" value="Clp1_C"/>
</dbReference>
<dbReference type="InterPro" id="IPR038238">
    <property type="entry name" value="Clp1_C_sf"/>
</dbReference>
<dbReference type="InterPro" id="IPR032324">
    <property type="entry name" value="Clp1_N"/>
</dbReference>
<dbReference type="InterPro" id="IPR038239">
    <property type="entry name" value="Clp1_N_sf"/>
</dbReference>
<dbReference type="InterPro" id="IPR032319">
    <property type="entry name" value="CLP1_P"/>
</dbReference>
<dbReference type="InterPro" id="IPR027417">
    <property type="entry name" value="P-loop_NTPase"/>
</dbReference>
<dbReference type="PANTHER" id="PTHR12755">
    <property type="entry name" value="CLEAVAGE/POLYADENYLATION FACTOR IA SUBUNIT CLP1P"/>
    <property type="match status" value="1"/>
</dbReference>
<dbReference type="PANTHER" id="PTHR12755:SF6">
    <property type="entry name" value="POLYRIBONUCLEOTIDE 5'-HYDROXYL-KINASE CLP1"/>
    <property type="match status" value="1"/>
</dbReference>
<dbReference type="Pfam" id="PF06807">
    <property type="entry name" value="Clp1"/>
    <property type="match status" value="1"/>
</dbReference>
<dbReference type="Pfam" id="PF16573">
    <property type="entry name" value="CLP1_N"/>
    <property type="match status" value="1"/>
</dbReference>
<dbReference type="Pfam" id="PF16575">
    <property type="entry name" value="CLP1_P"/>
    <property type="match status" value="1"/>
</dbReference>
<dbReference type="SUPFAM" id="SSF52540">
    <property type="entry name" value="P-loop containing nucleoside triphosphate hydrolases"/>
    <property type="match status" value="1"/>
</dbReference>
<name>CLP1_MYCMD</name>
<protein>
    <recommendedName>
        <fullName evidence="1">mRNA cleavage and polyadenylation factor CLP1</fullName>
    </recommendedName>
</protein>
<gene>
    <name evidence="1" type="primary">CLP1</name>
    <name type="ORF">UMAG_03070</name>
</gene>
<organism>
    <name type="scientific">Mycosarcoma maydis</name>
    <name type="common">Corn smut fungus</name>
    <name type="synonym">Ustilago maydis</name>
    <dbReference type="NCBI Taxonomy" id="5270"/>
    <lineage>
        <taxon>Eukaryota</taxon>
        <taxon>Fungi</taxon>
        <taxon>Dikarya</taxon>
        <taxon>Basidiomycota</taxon>
        <taxon>Ustilaginomycotina</taxon>
        <taxon>Ustilaginomycetes</taxon>
        <taxon>Ustilaginales</taxon>
        <taxon>Ustilaginaceae</taxon>
        <taxon>Mycosarcoma</taxon>
    </lineage>
</organism>
<reference key="1">
    <citation type="journal article" date="2006" name="Nature">
        <title>Insights from the genome of the biotrophic fungal plant pathogen Ustilago maydis.</title>
        <authorList>
            <person name="Kaemper J."/>
            <person name="Kahmann R."/>
            <person name="Boelker M."/>
            <person name="Ma L.-J."/>
            <person name="Brefort T."/>
            <person name="Saville B.J."/>
            <person name="Banuett F."/>
            <person name="Kronstad J.W."/>
            <person name="Gold S.E."/>
            <person name="Mueller O."/>
            <person name="Perlin M.H."/>
            <person name="Woesten H.A.B."/>
            <person name="de Vries R."/>
            <person name="Ruiz-Herrera J."/>
            <person name="Reynaga-Pena C.G."/>
            <person name="Snetselaar K."/>
            <person name="McCann M."/>
            <person name="Perez-Martin J."/>
            <person name="Feldbruegge M."/>
            <person name="Basse C.W."/>
            <person name="Steinberg G."/>
            <person name="Ibeas J.I."/>
            <person name="Holloman W."/>
            <person name="Guzman P."/>
            <person name="Farman M.L."/>
            <person name="Stajich J.E."/>
            <person name="Sentandreu R."/>
            <person name="Gonzalez-Prieto J.M."/>
            <person name="Kennell J.C."/>
            <person name="Molina L."/>
            <person name="Schirawski J."/>
            <person name="Mendoza-Mendoza A."/>
            <person name="Greilinger D."/>
            <person name="Muench K."/>
            <person name="Roessel N."/>
            <person name="Scherer M."/>
            <person name="Vranes M."/>
            <person name="Ladendorf O."/>
            <person name="Vincon V."/>
            <person name="Fuchs U."/>
            <person name="Sandrock B."/>
            <person name="Meng S."/>
            <person name="Ho E.C.H."/>
            <person name="Cahill M.J."/>
            <person name="Boyce K.J."/>
            <person name="Klose J."/>
            <person name="Klosterman S.J."/>
            <person name="Deelstra H.J."/>
            <person name="Ortiz-Castellanos L."/>
            <person name="Li W."/>
            <person name="Sanchez-Alonso P."/>
            <person name="Schreier P.H."/>
            <person name="Haeuser-Hahn I."/>
            <person name="Vaupel M."/>
            <person name="Koopmann E."/>
            <person name="Friedrich G."/>
            <person name="Voss H."/>
            <person name="Schlueter T."/>
            <person name="Margolis J."/>
            <person name="Platt D."/>
            <person name="Swimmer C."/>
            <person name="Gnirke A."/>
            <person name="Chen F."/>
            <person name="Vysotskaia V."/>
            <person name="Mannhaupt G."/>
            <person name="Gueldener U."/>
            <person name="Muensterkoetter M."/>
            <person name="Haase D."/>
            <person name="Oesterheld M."/>
            <person name="Mewes H.-W."/>
            <person name="Mauceli E.W."/>
            <person name="DeCaprio D."/>
            <person name="Wade C.M."/>
            <person name="Butler J."/>
            <person name="Young S.K."/>
            <person name="Jaffe D.B."/>
            <person name="Calvo S.E."/>
            <person name="Nusbaum C."/>
            <person name="Galagan J.E."/>
            <person name="Birren B.W."/>
        </authorList>
    </citation>
    <scope>NUCLEOTIDE SEQUENCE [LARGE SCALE GENOMIC DNA]</scope>
    <source>
        <strain>DSM 14603 / FGSC 9021 / UM521</strain>
    </source>
</reference>
<reference key="2">
    <citation type="submission" date="2014-09" db="EMBL/GenBank/DDBJ databases">
        <authorList>
            <person name="Gueldener U."/>
            <person name="Muensterkoetter M."/>
            <person name="Walter M.C."/>
            <person name="Mannhaupt G."/>
            <person name="Kahmann R."/>
        </authorList>
    </citation>
    <scope>GENOME REANNOTATION</scope>
    <source>
        <strain>DSM 14603 / FGSC 9021 / UM521</strain>
    </source>
</reference>
<keyword id="KW-0067">ATP-binding</keyword>
<keyword id="KW-0507">mRNA processing</keyword>
<keyword id="KW-0547">Nucleotide-binding</keyword>
<keyword id="KW-0539">Nucleus</keyword>
<keyword id="KW-1185">Reference proteome</keyword>
<evidence type="ECO:0000255" key="1">
    <source>
        <dbReference type="HAMAP-Rule" id="MF_03035"/>
    </source>
</evidence>
<evidence type="ECO:0000256" key="2">
    <source>
        <dbReference type="SAM" id="MobiDB-lite"/>
    </source>
</evidence>
<evidence type="ECO:0000305" key="3"/>
<feature type="chain" id="PRO_0000375216" description="mRNA cleavage and polyadenylation factor CLP1">
    <location>
        <begin position="1"/>
        <end position="629"/>
    </location>
</feature>
<feature type="region of interest" description="Disordered" evidence="2">
    <location>
        <begin position="142"/>
        <end position="166"/>
    </location>
</feature>
<feature type="region of interest" description="Disordered" evidence="2">
    <location>
        <begin position="562"/>
        <end position="582"/>
    </location>
</feature>
<feature type="compositionally biased region" description="Polar residues" evidence="2">
    <location>
        <begin position="148"/>
        <end position="159"/>
    </location>
</feature>
<feature type="binding site" evidence="1">
    <location>
        <position position="21"/>
    </location>
    <ligand>
        <name>ATP</name>
        <dbReference type="ChEBI" id="CHEBI:30616"/>
    </ligand>
</feature>
<feature type="binding site" evidence="1">
    <location>
        <position position="72"/>
    </location>
    <ligand>
        <name>ATP</name>
        <dbReference type="ChEBI" id="CHEBI:30616"/>
    </ligand>
</feature>
<feature type="binding site" evidence="1">
    <location>
        <begin position="183"/>
        <end position="188"/>
    </location>
    <ligand>
        <name>ATP</name>
        <dbReference type="ChEBI" id="CHEBI:30616"/>
    </ligand>
</feature>